<name>GRDA1_PEPAC</name>
<proteinExistence type="evidence at protein level"/>
<protein>
    <recommendedName>
        <fullName>Glycine/sarcosine/betaine reductase complex component A1</fullName>
        <ecNumber>1.21.4.2</ecNumber>
        <ecNumber>1.21.4.3</ecNumber>
        <ecNumber>1.21.4.4</ecNumber>
    </recommendedName>
    <alternativeName>
        <fullName>Selenoprotein PA 1</fullName>
    </alternativeName>
    <alternativeName>
        <fullName>Thioredoxin reductase complex selenoprotein A 1</fullName>
    </alternativeName>
</protein>
<gene>
    <name type="primary">grdA1</name>
    <name type="synonym">grdA</name>
</gene>
<accession>P50972</accession>
<comment type="function">
    <text>In the first step of glycine, betaine and sarcosine reductases, the substrate is bound to component PB via a Schiff base intermediate. Then the PB-activated substrate is nucleophilically attacked by the selenol anion of component PA to transform it to a carboxymethylated selenoether and the respective amine. By action of component PC, acetyl phosphate is formed, leaving component PA in its oxidized state. Finally component PA becomes reduced by the thioredoxin system to start a new catalytic cycle of reductive deamination.</text>
</comment>
<comment type="catalytic activity">
    <reaction>
        <text>acetyl phosphate + [thioredoxin]-disulfide + NH4(+) + H2O = [thioredoxin]-dithiol + glycine + phosphate + H(+)</text>
        <dbReference type="Rhea" id="RHEA:12232"/>
        <dbReference type="Rhea" id="RHEA-COMP:10698"/>
        <dbReference type="Rhea" id="RHEA-COMP:10700"/>
        <dbReference type="ChEBI" id="CHEBI:15377"/>
        <dbReference type="ChEBI" id="CHEBI:15378"/>
        <dbReference type="ChEBI" id="CHEBI:22191"/>
        <dbReference type="ChEBI" id="CHEBI:28938"/>
        <dbReference type="ChEBI" id="CHEBI:29950"/>
        <dbReference type="ChEBI" id="CHEBI:43474"/>
        <dbReference type="ChEBI" id="CHEBI:50058"/>
        <dbReference type="ChEBI" id="CHEBI:57305"/>
        <dbReference type="EC" id="1.21.4.2"/>
    </reaction>
</comment>
<comment type="catalytic activity">
    <reaction>
        <text>acetyl phosphate + methylamine + [thioredoxin]-disulfide + H2O = sarcosine + [thioredoxin]-dithiol + phosphate + H(+)</text>
        <dbReference type="Rhea" id="RHEA:12825"/>
        <dbReference type="Rhea" id="RHEA-COMP:10698"/>
        <dbReference type="Rhea" id="RHEA-COMP:10700"/>
        <dbReference type="ChEBI" id="CHEBI:15377"/>
        <dbReference type="ChEBI" id="CHEBI:15378"/>
        <dbReference type="ChEBI" id="CHEBI:22191"/>
        <dbReference type="ChEBI" id="CHEBI:29950"/>
        <dbReference type="ChEBI" id="CHEBI:43474"/>
        <dbReference type="ChEBI" id="CHEBI:50058"/>
        <dbReference type="ChEBI" id="CHEBI:57433"/>
        <dbReference type="ChEBI" id="CHEBI:59338"/>
        <dbReference type="EC" id="1.21.4.3"/>
    </reaction>
</comment>
<comment type="catalytic activity">
    <reaction>
        <text>acetyl phosphate + trimethylamine + [thioredoxin]-disulfide + H2O = glycine betaine + [thioredoxin]-dithiol + phosphate + H(+)</text>
        <dbReference type="Rhea" id="RHEA:11848"/>
        <dbReference type="Rhea" id="RHEA-COMP:10698"/>
        <dbReference type="Rhea" id="RHEA-COMP:10700"/>
        <dbReference type="ChEBI" id="CHEBI:15377"/>
        <dbReference type="ChEBI" id="CHEBI:15378"/>
        <dbReference type="ChEBI" id="CHEBI:17750"/>
        <dbReference type="ChEBI" id="CHEBI:22191"/>
        <dbReference type="ChEBI" id="CHEBI:29950"/>
        <dbReference type="ChEBI" id="CHEBI:43474"/>
        <dbReference type="ChEBI" id="CHEBI:50058"/>
        <dbReference type="ChEBI" id="CHEBI:58389"/>
        <dbReference type="EC" id="1.21.4.4"/>
    </reaction>
</comment>
<comment type="subunit">
    <text>Monomer. Component of the glycine, sarcosine and betaine reductase complexes, together with components B and C.</text>
</comment>
<comment type="similarity">
    <text evidence="3">Belongs to the GrdA family.</text>
</comment>
<evidence type="ECO:0000269" key="1">
    <source>
    </source>
</evidence>
<evidence type="ECO:0000269" key="2">
    <source>
    </source>
</evidence>
<evidence type="ECO:0000305" key="3"/>
<organism>
    <name type="scientific">Peptoclostridium acidaminophilum</name>
    <name type="common">Eubacterium acidaminophilum</name>
    <dbReference type="NCBI Taxonomy" id="1731"/>
    <lineage>
        <taxon>Bacteria</taxon>
        <taxon>Bacillati</taxon>
        <taxon>Bacillota</taxon>
        <taxon>Clostridia</taxon>
        <taxon>Peptostreptococcales</taxon>
        <taxon>Peptoclostridiaceae</taxon>
        <taxon>Peptoclostridium</taxon>
    </lineage>
</organism>
<reference key="1">
    <citation type="journal article" date="1993" name="Eur. J. Biochem.">
        <title>Components of glycine reductase from Eubacterium acidaminophilum. Cloning, sequencing and identification of the genes for thioredoxin reductase, thioredoxin and selenoprotein PA.</title>
        <authorList>
            <person name="Luebbers M."/>
            <person name="Andreesen J.R."/>
        </authorList>
    </citation>
    <scope>NUCLEOTIDE SEQUENCE [GENOMIC DNA]</scope>
    <source>
        <strain>ATCC 49065 / DSM 3953 / al-2</strain>
    </source>
</reference>
<reference key="2">
    <citation type="journal article" date="1991" name="J. Bacteriol.">
        <title>Interaction of selenoprotein PA and the thioredoxin system, components of the NADPH-dependent reduction of glycine in Eubacterium acidaminophilum and Clostridium litorale.</title>
        <authorList>
            <person name="Dietrichs D."/>
            <person name="Meyer M."/>
            <person name="Rieth M."/>
            <person name="Andreesen J.R."/>
        </authorList>
    </citation>
    <scope>PROTEIN SEQUENCE OF 2-49</scope>
    <scope>SELENOCYSTEINE AT SEC-44</scope>
    <source>
        <strain>ATCC 49065 / DSM 3953 / al-2</strain>
    </source>
</reference>
<reference key="3">
    <citation type="journal article" date="1992" name="J. Bacteriol.">
        <authorList>
            <person name="Dietrichs D."/>
            <person name="Meyer M."/>
            <person name="Rieth M."/>
            <person name="Andreesen J.R."/>
        </authorList>
    </citation>
    <scope>ERRATUM OF PUBMED:1917832</scope>
</reference>
<reference key="4">
    <citation type="journal article" date="1999" name="Eur. J. Biochem.">
        <title>Substrate-specific selenoprotein B of glycine reductase from Eubacterium acidaminophilum. Biochemical and molecular analysis.</title>
        <authorList>
            <person name="Wagner M."/>
            <person name="Sonntag D."/>
            <person name="Grimm R."/>
            <person name="Pich A."/>
            <person name="Eckerskorn C."/>
            <person name="Soehling B."/>
            <person name="Andreesen J.R."/>
        </authorList>
    </citation>
    <scope>PROTEIN SEQUENCE OF 2-45</scope>
    <scope>SELENOCYSTEINE AT SEC-44</scope>
    <source>
        <strain>ATCC 49065 / DSM 3953 / al-2</strain>
    </source>
</reference>
<dbReference type="EC" id="1.21.4.2"/>
<dbReference type="EC" id="1.21.4.3"/>
<dbReference type="EC" id="1.21.4.4"/>
<dbReference type="EMBL" id="L04500">
    <property type="protein sequence ID" value="AAB93305.2"/>
    <property type="molecule type" value="Genomic_DNA"/>
</dbReference>
<dbReference type="PIR" id="S38990">
    <property type="entry name" value="S38990"/>
</dbReference>
<dbReference type="BioCyc" id="MetaCyc:MONOMER-20600"/>
<dbReference type="GO" id="GO:0030700">
    <property type="term" value="C:glycine reductase complex"/>
    <property type="evidence" value="ECO:0007669"/>
    <property type="project" value="InterPro"/>
</dbReference>
<dbReference type="GO" id="GO:0033795">
    <property type="term" value="F:betaine reductase activity"/>
    <property type="evidence" value="ECO:0007669"/>
    <property type="project" value="UniProtKB-EC"/>
</dbReference>
<dbReference type="GO" id="GO:0030699">
    <property type="term" value="F:glycine reductase activity"/>
    <property type="evidence" value="ECO:0007669"/>
    <property type="project" value="UniProtKB-UniRule"/>
</dbReference>
<dbReference type="GO" id="GO:0033794">
    <property type="term" value="F:sarcosine reductase activity"/>
    <property type="evidence" value="ECO:0007669"/>
    <property type="project" value="UniProtKB-EC"/>
</dbReference>
<dbReference type="HAMAP" id="MF_00826">
    <property type="entry name" value="GRDA"/>
    <property type="match status" value="1"/>
</dbReference>
<dbReference type="InterPro" id="IPR006812">
    <property type="entry name" value="GRDA"/>
</dbReference>
<dbReference type="NCBIfam" id="NF040748">
    <property type="entry name" value="reduct_selen_A"/>
    <property type="match status" value="1"/>
</dbReference>
<dbReference type="Pfam" id="PF04723">
    <property type="entry name" value="GRDA"/>
    <property type="match status" value="1"/>
</dbReference>
<dbReference type="PIRSF" id="PIRSF000181">
    <property type="entry name" value="Grc_selenoprot_A"/>
    <property type="match status" value="1"/>
</dbReference>
<keyword id="KW-0903">Direct protein sequencing</keyword>
<keyword id="KW-0560">Oxidoreductase</keyword>
<keyword id="KW-0712">Selenocysteine</keyword>
<feature type="initiator methionine" description="Removed" evidence="1 2">
    <location>
        <position position="1"/>
    </location>
</feature>
<feature type="chain" id="PRO_0000194467" description="Glycine/sarcosine/betaine reductase complex component A1">
    <location>
        <begin position="2"/>
        <end position="158"/>
    </location>
</feature>
<feature type="active site">
    <location>
        <position position="44"/>
    </location>
</feature>
<feature type="non-standard amino acid" description="Selenocysteine">
    <location>
        <position position="44"/>
    </location>
</feature>
<sequence>MSLFDGKKVIIIGDRDGIPGPAIAECLKGTAAEVVYSATECFVUTAAGAMDLENQNRVKGFADQFGAENLVVLVGAAEAESAGLAAETVTAGDPTFAGPLAGVQLGLRVFHAVEPEFKDAVDSAVYDEQIGMMEMVLDVDSIIAEMKSIREQFGKFND</sequence>